<comment type="function">
    <text evidence="4">Inhibits trypsin with a Ki of 0.25 uM. Inhibits the trypsin-like proteases in midguts of larval H.armigera, S.exigua, and P.rapae.</text>
</comment>
<comment type="biophysicochemical properties">
    <phDependence>
        <text evidence="4">Stable from pH 2.0 to 12.0.</text>
    </phDependence>
    <temperatureDependence>
        <text evidence="4">Retains almost 100% of its activity after heating for 10 minutes at 70 degrees Celsius, activity is lost rapidly above 70 degrees Celsius.</text>
    </temperatureDependence>
</comment>
<comment type="subunit">
    <text evidence="4">Heterodimer of an alpha and a beta chain linked by a disulfide bond.</text>
</comment>
<comment type="mass spectrometry"/>
<comment type="miscellaneous">
    <text evidence="4">The reactive bond is likely to include a lysine residue.</text>
</comment>
<comment type="similarity">
    <text evidence="2">Belongs to the protease inhibitor I3 (leguminous Kunitz-type inhibitor) family.</text>
</comment>
<comment type="caution">
    <text evidence="4">The order of the peptides shown is unknown.</text>
</comment>
<reference evidence="6" key="1">
    <citation type="journal article" date="2008" name="Biotechnol. Lett.">
        <title>Identification of a Kunitz inhibitor from Albizzia kalkora and its inhibitory effect against pest midgut proteases.</title>
        <authorList>
            <person name="Zhou J.-Y."/>
            <person name="Liao H."/>
            <person name="Zhang N.-H."/>
            <person name="Tang L."/>
            <person name="Xu Y."/>
            <person name="Chen F."/>
        </authorList>
    </citation>
    <scope>PROTEIN SEQUENCE</scope>
    <scope>FUNCTION</scope>
    <scope>BIOPHYSICOCHEMICAL PROPERTIES</scope>
    <scope>SUBUNIT</scope>
    <scope>MASS SPECTROMETRY</scope>
    <source>
        <tissue evidence="4">Seed</tissue>
    </source>
</reference>
<sequence>KELLDADGDILRNGGPAYPGLMPGVERDLPASGWGLPRRTGDESCPLNVKAVR</sequence>
<proteinExistence type="evidence at protein level"/>
<name>ITRA_ALBKA</name>
<protein>
    <recommendedName>
        <fullName>Kunitz-type trypsin inhibitor alpha chain</fullName>
    </recommendedName>
    <alternativeName>
        <fullName>AKTI</fullName>
    </alternativeName>
</protein>
<evidence type="ECO:0000250" key="1">
    <source>
        <dbReference type="UniProtKB" id="P83036"/>
    </source>
</evidence>
<evidence type="ECO:0000255" key="2"/>
<evidence type="ECO:0000256" key="3">
    <source>
        <dbReference type="SAM" id="MobiDB-lite"/>
    </source>
</evidence>
<evidence type="ECO:0000269" key="4">
    <source>
    </source>
</evidence>
<evidence type="ECO:0000303" key="5">
    <source>
    </source>
</evidence>
<evidence type="ECO:0000305" key="6"/>
<keyword id="KW-0903">Direct protein sequencing</keyword>
<keyword id="KW-1015">Disulfide bond</keyword>
<keyword id="KW-0646">Protease inhibitor</keyword>
<keyword id="KW-0722">Serine protease inhibitor</keyword>
<accession>P85498</accession>
<dbReference type="GO" id="GO:0004867">
    <property type="term" value="F:serine-type endopeptidase inhibitor activity"/>
    <property type="evidence" value="ECO:0000314"/>
    <property type="project" value="UniProtKB"/>
</dbReference>
<feature type="chain" id="PRO_0000337168" description="Kunitz-type trypsin inhibitor alpha chain">
    <location>
        <begin position="1"/>
        <end position="53" status="greater than"/>
    </location>
</feature>
<feature type="region of interest" description="Disordered" evidence="3">
    <location>
        <begin position="33"/>
        <end position="53"/>
    </location>
</feature>
<feature type="disulfide bond" evidence="1">
    <location>
        <begin position="45"/>
        <end status="unknown"/>
    </location>
</feature>
<feature type="non-consecutive residues" evidence="5">
    <location>
        <begin position="15"/>
        <end position="16"/>
    </location>
</feature>
<feature type="non-consecutive residues" evidence="5">
    <location>
        <begin position="27"/>
        <end position="28"/>
    </location>
</feature>
<feature type="non-consecutive residues" evidence="5">
    <location>
        <begin position="39"/>
        <end position="40"/>
    </location>
</feature>
<feature type="non-terminal residue" evidence="5">
    <location>
        <position position="53"/>
    </location>
</feature>
<organism>
    <name type="scientific">Albizia kalkora</name>
    <name type="common">Kalkora mimosa</name>
    <name type="synonym">Mimosa kalkora</name>
    <dbReference type="NCBI Taxonomy" id="199156"/>
    <lineage>
        <taxon>Eukaryota</taxon>
        <taxon>Viridiplantae</taxon>
        <taxon>Streptophyta</taxon>
        <taxon>Embryophyta</taxon>
        <taxon>Tracheophyta</taxon>
        <taxon>Spermatophyta</taxon>
        <taxon>Magnoliopsida</taxon>
        <taxon>eudicotyledons</taxon>
        <taxon>Gunneridae</taxon>
        <taxon>Pentapetalae</taxon>
        <taxon>rosids</taxon>
        <taxon>fabids</taxon>
        <taxon>Fabales</taxon>
        <taxon>Fabaceae</taxon>
        <taxon>Caesalpinioideae</taxon>
        <taxon>mimosoid clade</taxon>
        <taxon>Ingeae</taxon>
        <taxon>Albizia</taxon>
    </lineage>
</organism>